<accession>Q7V9X1</accession>
<reference key="1">
    <citation type="journal article" date="2003" name="Proc. Natl. Acad. Sci. U.S.A.">
        <title>Genome sequence of the cyanobacterium Prochlorococcus marinus SS120, a nearly minimal oxyphototrophic genome.</title>
        <authorList>
            <person name="Dufresne A."/>
            <person name="Salanoubat M."/>
            <person name="Partensky F."/>
            <person name="Artiguenave F."/>
            <person name="Axmann I.M."/>
            <person name="Barbe V."/>
            <person name="Duprat S."/>
            <person name="Galperin M.Y."/>
            <person name="Koonin E.V."/>
            <person name="Le Gall F."/>
            <person name="Makarova K.S."/>
            <person name="Ostrowski M."/>
            <person name="Oztas S."/>
            <person name="Robert C."/>
            <person name="Rogozin I.B."/>
            <person name="Scanlan D.J."/>
            <person name="Tandeau de Marsac N."/>
            <person name="Weissenbach J."/>
            <person name="Wincker P."/>
            <person name="Wolf Y.I."/>
            <person name="Hess W.R."/>
        </authorList>
    </citation>
    <scope>NUCLEOTIDE SEQUENCE [LARGE SCALE GENOMIC DNA]</scope>
    <source>
        <strain>SARG / CCMP1375 / SS120</strain>
    </source>
</reference>
<evidence type="ECO:0000255" key="1">
    <source>
        <dbReference type="HAMAP-Rule" id="MF_01345"/>
    </source>
</evidence>
<evidence type="ECO:0000305" key="2"/>
<proteinExistence type="inferred from homology"/>
<comment type="function">
    <text evidence="1">One of the primary rRNA binding proteins, it binds specifically to the 5'-end of 16S ribosomal RNA.</text>
</comment>
<comment type="subunit">
    <text evidence="1">Part of the 30S ribosomal subunit.</text>
</comment>
<comment type="similarity">
    <text evidence="1">Belongs to the universal ribosomal protein uS17 family.</text>
</comment>
<protein>
    <recommendedName>
        <fullName evidence="1">Small ribosomal subunit protein uS17</fullName>
    </recommendedName>
    <alternativeName>
        <fullName evidence="2">30S ribosomal protein S17</fullName>
    </alternativeName>
</protein>
<gene>
    <name evidence="1" type="primary">rpsQ</name>
    <name evidence="1" type="synonym">rps17</name>
    <name type="ordered locus">Pro_1703</name>
</gene>
<name>RS17_PROMA</name>
<keyword id="KW-1185">Reference proteome</keyword>
<keyword id="KW-0687">Ribonucleoprotein</keyword>
<keyword id="KW-0689">Ribosomal protein</keyword>
<keyword id="KW-0694">RNA-binding</keyword>
<keyword id="KW-0699">rRNA-binding</keyword>
<dbReference type="EMBL" id="AE017126">
    <property type="protein sequence ID" value="AAQ00747.1"/>
    <property type="molecule type" value="Genomic_DNA"/>
</dbReference>
<dbReference type="RefSeq" id="NP_876094.1">
    <property type="nucleotide sequence ID" value="NC_005042.1"/>
</dbReference>
<dbReference type="RefSeq" id="WP_011125852.1">
    <property type="nucleotide sequence ID" value="NC_005042.1"/>
</dbReference>
<dbReference type="SMR" id="Q7V9X1"/>
<dbReference type="STRING" id="167539.Pro_1703"/>
<dbReference type="EnsemblBacteria" id="AAQ00747">
    <property type="protein sequence ID" value="AAQ00747"/>
    <property type="gene ID" value="Pro_1703"/>
</dbReference>
<dbReference type="KEGG" id="pma:Pro_1703"/>
<dbReference type="PATRIC" id="fig|167539.5.peg.1798"/>
<dbReference type="eggNOG" id="COG0186">
    <property type="taxonomic scope" value="Bacteria"/>
</dbReference>
<dbReference type="HOGENOM" id="CLU_073626_1_2_3"/>
<dbReference type="OrthoDB" id="9811714at2"/>
<dbReference type="Proteomes" id="UP000001420">
    <property type="component" value="Chromosome"/>
</dbReference>
<dbReference type="GO" id="GO:0022627">
    <property type="term" value="C:cytosolic small ribosomal subunit"/>
    <property type="evidence" value="ECO:0007669"/>
    <property type="project" value="TreeGrafter"/>
</dbReference>
<dbReference type="GO" id="GO:0019843">
    <property type="term" value="F:rRNA binding"/>
    <property type="evidence" value="ECO:0007669"/>
    <property type="project" value="UniProtKB-UniRule"/>
</dbReference>
<dbReference type="GO" id="GO:0003735">
    <property type="term" value="F:structural constituent of ribosome"/>
    <property type="evidence" value="ECO:0007669"/>
    <property type="project" value="InterPro"/>
</dbReference>
<dbReference type="GO" id="GO:0006412">
    <property type="term" value="P:translation"/>
    <property type="evidence" value="ECO:0007669"/>
    <property type="project" value="UniProtKB-UniRule"/>
</dbReference>
<dbReference type="CDD" id="cd00364">
    <property type="entry name" value="Ribosomal_uS17"/>
    <property type="match status" value="1"/>
</dbReference>
<dbReference type="Gene3D" id="2.40.50.140">
    <property type="entry name" value="Nucleic acid-binding proteins"/>
    <property type="match status" value="1"/>
</dbReference>
<dbReference type="HAMAP" id="MF_01345_B">
    <property type="entry name" value="Ribosomal_uS17_B"/>
    <property type="match status" value="1"/>
</dbReference>
<dbReference type="InterPro" id="IPR012340">
    <property type="entry name" value="NA-bd_OB-fold"/>
</dbReference>
<dbReference type="InterPro" id="IPR000266">
    <property type="entry name" value="Ribosomal_uS17"/>
</dbReference>
<dbReference type="InterPro" id="IPR019984">
    <property type="entry name" value="Ribosomal_uS17_bact/chlr"/>
</dbReference>
<dbReference type="InterPro" id="IPR019979">
    <property type="entry name" value="Ribosomal_uS17_CS"/>
</dbReference>
<dbReference type="NCBIfam" id="NF004123">
    <property type="entry name" value="PRK05610.1"/>
    <property type="match status" value="1"/>
</dbReference>
<dbReference type="NCBIfam" id="TIGR03635">
    <property type="entry name" value="uS17_bact"/>
    <property type="match status" value="1"/>
</dbReference>
<dbReference type="PANTHER" id="PTHR10744">
    <property type="entry name" value="40S RIBOSOMAL PROTEIN S11 FAMILY MEMBER"/>
    <property type="match status" value="1"/>
</dbReference>
<dbReference type="PANTHER" id="PTHR10744:SF1">
    <property type="entry name" value="SMALL RIBOSOMAL SUBUNIT PROTEIN US17M"/>
    <property type="match status" value="1"/>
</dbReference>
<dbReference type="Pfam" id="PF00366">
    <property type="entry name" value="Ribosomal_S17"/>
    <property type="match status" value="1"/>
</dbReference>
<dbReference type="PRINTS" id="PR00973">
    <property type="entry name" value="RIBOSOMALS17"/>
</dbReference>
<dbReference type="SUPFAM" id="SSF50249">
    <property type="entry name" value="Nucleic acid-binding proteins"/>
    <property type="match status" value="1"/>
</dbReference>
<dbReference type="PROSITE" id="PS00056">
    <property type="entry name" value="RIBOSOMAL_S17"/>
    <property type="match status" value="1"/>
</dbReference>
<sequence>MALKERLGTVVSDKMDKTVVVAVVNRFPHSIYQKTVSRTTRYKAHDEENNCKVGDRVRITETRPLSATKRWSVAEVLRTTKQEKEAVK</sequence>
<organism>
    <name type="scientific">Prochlorococcus marinus (strain SARG / CCMP1375 / SS120)</name>
    <dbReference type="NCBI Taxonomy" id="167539"/>
    <lineage>
        <taxon>Bacteria</taxon>
        <taxon>Bacillati</taxon>
        <taxon>Cyanobacteriota</taxon>
        <taxon>Cyanophyceae</taxon>
        <taxon>Synechococcales</taxon>
        <taxon>Prochlorococcaceae</taxon>
        <taxon>Prochlorococcus</taxon>
    </lineage>
</organism>
<feature type="chain" id="PRO_0000233535" description="Small ribosomal subunit protein uS17">
    <location>
        <begin position="1"/>
        <end position="88"/>
    </location>
</feature>